<organism>
    <name type="scientific">Oryza sativa subsp. indica</name>
    <name type="common">Rice</name>
    <dbReference type="NCBI Taxonomy" id="39946"/>
    <lineage>
        <taxon>Eukaryota</taxon>
        <taxon>Viridiplantae</taxon>
        <taxon>Streptophyta</taxon>
        <taxon>Embryophyta</taxon>
        <taxon>Tracheophyta</taxon>
        <taxon>Spermatophyta</taxon>
        <taxon>Magnoliopsida</taxon>
        <taxon>Liliopsida</taxon>
        <taxon>Poales</taxon>
        <taxon>Poaceae</taxon>
        <taxon>BOP clade</taxon>
        <taxon>Oryzoideae</taxon>
        <taxon>Oryzeae</taxon>
        <taxon>Oryzinae</taxon>
        <taxon>Oryza</taxon>
        <taxon>Oryza sativa</taxon>
    </lineage>
</organism>
<keyword id="KW-0325">Glycoprotein</keyword>
<keyword id="KW-0328">Glycosyltransferase</keyword>
<keyword id="KW-0333">Golgi apparatus</keyword>
<keyword id="KW-0472">Membrane</keyword>
<keyword id="KW-1185">Reference proteome</keyword>
<keyword id="KW-0735">Signal-anchor</keyword>
<keyword id="KW-0808">Transferase</keyword>
<keyword id="KW-0812">Transmembrane</keyword>
<keyword id="KW-1133">Transmembrane helix</keyword>
<feature type="chain" id="PRO_0000434332" description="Probable glycosyltransferase 5">
    <location>
        <begin position="1"/>
        <end position="449"/>
    </location>
</feature>
<feature type="topological domain" description="Cytoplasmic" evidence="5">
    <location>
        <begin position="1"/>
        <end position="28"/>
    </location>
</feature>
<feature type="transmembrane region" description="Helical; Signal-anchor for type II membrane protein" evidence="2">
    <location>
        <begin position="29"/>
        <end position="49"/>
    </location>
</feature>
<feature type="topological domain" description="Lumenal" evidence="5">
    <location>
        <begin position="50"/>
        <end position="449"/>
    </location>
</feature>
<feature type="region of interest" description="Disordered" evidence="4">
    <location>
        <begin position="1"/>
        <end position="24"/>
    </location>
</feature>
<feature type="region of interest" description="Disordered" evidence="4">
    <location>
        <begin position="74"/>
        <end position="109"/>
    </location>
</feature>
<feature type="compositionally biased region" description="Basic and acidic residues" evidence="4">
    <location>
        <begin position="1"/>
        <end position="14"/>
    </location>
</feature>
<feature type="glycosylation site" description="N-linked (GlcNAc...) asparagine" evidence="3">
    <location>
        <position position="89"/>
    </location>
</feature>
<feature type="glycosylation site" description="N-linked (GlcNAc...) asparagine" evidence="3">
    <location>
        <position position="413"/>
    </location>
</feature>
<feature type="glycosylation site" description="N-linked (GlcNAc...) asparagine" evidence="3">
    <location>
        <position position="422"/>
    </location>
</feature>
<protein>
    <recommendedName>
        <fullName evidence="5">Probable glycosyltransferase 5</fullName>
        <ecNumber evidence="5">2.4.-.-</ecNumber>
    </recommendedName>
</protein>
<accession>A2XFT6</accession>
<name>GT5_ORYSI</name>
<comment type="function">
    <text evidence="1">Probable glycosyltransferase that may be involved in the biosynthesis of xyloglucan.</text>
</comment>
<comment type="subcellular location">
    <subcellularLocation>
        <location evidence="5">Golgi apparatus membrane</location>
        <topology evidence="5">Single-pass type II membrane protein</topology>
    </subcellularLocation>
</comment>
<comment type="similarity">
    <text evidence="5">Belongs to the glycosyltransferase 34 family.</text>
</comment>
<comment type="sequence caution" evidence="5">
    <conflict type="erroneous initiation">
        <sequence resource="EMBL-CDS" id="EAY89696"/>
    </conflict>
    <text>Truncated N-terminus.</text>
</comment>
<proteinExistence type="inferred from homology"/>
<gene>
    <name evidence="5" type="primary">GT5</name>
    <name evidence="6" type="ORF">OsI_11232</name>
</gene>
<evidence type="ECO:0000250" key="1">
    <source>
        <dbReference type="UniProtKB" id="Q10MQ0"/>
    </source>
</evidence>
<evidence type="ECO:0000255" key="2"/>
<evidence type="ECO:0000255" key="3">
    <source>
        <dbReference type="PROSITE-ProRule" id="PRU00498"/>
    </source>
</evidence>
<evidence type="ECO:0000256" key="4">
    <source>
        <dbReference type="SAM" id="MobiDB-lite"/>
    </source>
</evidence>
<evidence type="ECO:0000305" key="5"/>
<evidence type="ECO:0000312" key="6">
    <source>
        <dbReference type="EMBL" id="EAY89696.1"/>
    </source>
</evidence>
<reference key="1">
    <citation type="journal article" date="2005" name="PLoS Biol.">
        <title>The genomes of Oryza sativa: a history of duplications.</title>
        <authorList>
            <person name="Yu J."/>
            <person name="Wang J."/>
            <person name="Lin W."/>
            <person name="Li S."/>
            <person name="Li H."/>
            <person name="Zhou J."/>
            <person name="Ni P."/>
            <person name="Dong W."/>
            <person name="Hu S."/>
            <person name="Zeng C."/>
            <person name="Zhang J."/>
            <person name="Zhang Y."/>
            <person name="Li R."/>
            <person name="Xu Z."/>
            <person name="Li S."/>
            <person name="Li X."/>
            <person name="Zheng H."/>
            <person name="Cong L."/>
            <person name="Lin L."/>
            <person name="Yin J."/>
            <person name="Geng J."/>
            <person name="Li G."/>
            <person name="Shi J."/>
            <person name="Liu J."/>
            <person name="Lv H."/>
            <person name="Li J."/>
            <person name="Wang J."/>
            <person name="Deng Y."/>
            <person name="Ran L."/>
            <person name="Shi X."/>
            <person name="Wang X."/>
            <person name="Wu Q."/>
            <person name="Li C."/>
            <person name="Ren X."/>
            <person name="Wang J."/>
            <person name="Wang X."/>
            <person name="Li D."/>
            <person name="Liu D."/>
            <person name="Zhang X."/>
            <person name="Ji Z."/>
            <person name="Zhao W."/>
            <person name="Sun Y."/>
            <person name="Zhang Z."/>
            <person name="Bao J."/>
            <person name="Han Y."/>
            <person name="Dong L."/>
            <person name="Ji J."/>
            <person name="Chen P."/>
            <person name="Wu S."/>
            <person name="Liu J."/>
            <person name="Xiao Y."/>
            <person name="Bu D."/>
            <person name="Tan J."/>
            <person name="Yang L."/>
            <person name="Ye C."/>
            <person name="Zhang J."/>
            <person name="Xu J."/>
            <person name="Zhou Y."/>
            <person name="Yu Y."/>
            <person name="Zhang B."/>
            <person name="Zhuang S."/>
            <person name="Wei H."/>
            <person name="Liu B."/>
            <person name="Lei M."/>
            <person name="Yu H."/>
            <person name="Li Y."/>
            <person name="Xu H."/>
            <person name="Wei S."/>
            <person name="He X."/>
            <person name="Fang L."/>
            <person name="Zhang Z."/>
            <person name="Zhang Y."/>
            <person name="Huang X."/>
            <person name="Su Z."/>
            <person name="Tong W."/>
            <person name="Li J."/>
            <person name="Tong Z."/>
            <person name="Li S."/>
            <person name="Ye J."/>
            <person name="Wang L."/>
            <person name="Fang L."/>
            <person name="Lei T."/>
            <person name="Chen C.-S."/>
            <person name="Chen H.-C."/>
            <person name="Xu Z."/>
            <person name="Li H."/>
            <person name="Huang H."/>
            <person name="Zhang F."/>
            <person name="Xu H."/>
            <person name="Li N."/>
            <person name="Zhao C."/>
            <person name="Li S."/>
            <person name="Dong L."/>
            <person name="Huang Y."/>
            <person name="Li L."/>
            <person name="Xi Y."/>
            <person name="Qi Q."/>
            <person name="Li W."/>
            <person name="Zhang B."/>
            <person name="Hu W."/>
            <person name="Zhang Y."/>
            <person name="Tian X."/>
            <person name="Jiao Y."/>
            <person name="Liang X."/>
            <person name="Jin J."/>
            <person name="Gao L."/>
            <person name="Zheng W."/>
            <person name="Hao B."/>
            <person name="Liu S.-M."/>
            <person name="Wang W."/>
            <person name="Yuan L."/>
            <person name="Cao M."/>
            <person name="McDermott J."/>
            <person name="Samudrala R."/>
            <person name="Wang J."/>
            <person name="Wong G.K.-S."/>
            <person name="Yang H."/>
        </authorList>
    </citation>
    <scope>NUCLEOTIDE SEQUENCE [LARGE SCALE GENOMIC DNA]</scope>
    <source>
        <strain>cv. 93-11</strain>
    </source>
</reference>
<dbReference type="EC" id="2.4.-.-" evidence="5"/>
<dbReference type="EMBL" id="CM000128">
    <property type="protein sequence ID" value="EAY89696.1"/>
    <property type="status" value="ALT_INIT"/>
    <property type="molecule type" value="Genomic_DNA"/>
</dbReference>
<dbReference type="SMR" id="A2XFT6"/>
<dbReference type="STRING" id="39946.A2XFT6"/>
<dbReference type="GlyCosmos" id="A2XFT6">
    <property type="glycosylation" value="3 sites, No reported glycans"/>
</dbReference>
<dbReference type="EnsemblPlants" id="OsGoSa_03g0014790.01">
    <property type="protein sequence ID" value="OsGoSa_03g0014790.01"/>
    <property type="gene ID" value="OsGoSa_03g0014790"/>
</dbReference>
<dbReference type="EnsemblPlants" id="OsIR64_03g0014500.01">
    <property type="protein sequence ID" value="OsIR64_03g0014500.01"/>
    <property type="gene ID" value="OsIR64_03g0014500"/>
</dbReference>
<dbReference type="EnsemblPlants" id="OsKYG_03g0014750.01">
    <property type="protein sequence ID" value="OsKYG_03g0014750.01"/>
    <property type="gene ID" value="OsKYG_03g0014750"/>
</dbReference>
<dbReference type="EnsemblPlants" id="OsLaMu_03g0014630.01">
    <property type="protein sequence ID" value="OsLaMu_03g0014630.01"/>
    <property type="gene ID" value="OsLaMu_03g0014630"/>
</dbReference>
<dbReference type="EnsemblPlants" id="OsLima_03g0014750.01">
    <property type="protein sequence ID" value="OsLima_03g0014750.01"/>
    <property type="gene ID" value="OsLima_03g0014750"/>
</dbReference>
<dbReference type="EnsemblPlants" id="OsLiXu_03g0014660.01">
    <property type="protein sequence ID" value="OsLiXu_03g0014660.01"/>
    <property type="gene ID" value="OsLiXu_03g0014660"/>
</dbReference>
<dbReference type="EnsemblPlants" id="OsMH63_03G014660_01">
    <property type="protein sequence ID" value="OsMH63_03G014660_01"/>
    <property type="gene ID" value="OsMH63_03G014660"/>
</dbReference>
<dbReference type="EnsemblPlants" id="OsPr106_03g0014600.01">
    <property type="protein sequence ID" value="OsPr106_03g0014600.01"/>
    <property type="gene ID" value="OsPr106_03g0014600"/>
</dbReference>
<dbReference type="EnsemblPlants" id="OsZS97_03G014610_01">
    <property type="protein sequence ID" value="OsZS97_03G014610_01"/>
    <property type="gene ID" value="OsZS97_03G014610"/>
</dbReference>
<dbReference type="Gramene" id="OsGoSa_03g0014790.01">
    <property type="protein sequence ID" value="OsGoSa_03g0014790.01"/>
    <property type="gene ID" value="OsGoSa_03g0014790"/>
</dbReference>
<dbReference type="Gramene" id="OsIR64_03g0014500.01">
    <property type="protein sequence ID" value="OsIR64_03g0014500.01"/>
    <property type="gene ID" value="OsIR64_03g0014500"/>
</dbReference>
<dbReference type="Gramene" id="OsKYG_03g0014750.01">
    <property type="protein sequence ID" value="OsKYG_03g0014750.01"/>
    <property type="gene ID" value="OsKYG_03g0014750"/>
</dbReference>
<dbReference type="Gramene" id="OsLaMu_03g0014630.01">
    <property type="protein sequence ID" value="OsLaMu_03g0014630.01"/>
    <property type="gene ID" value="OsLaMu_03g0014630"/>
</dbReference>
<dbReference type="Gramene" id="OsLima_03g0014750.01">
    <property type="protein sequence ID" value="OsLima_03g0014750.01"/>
    <property type="gene ID" value="OsLima_03g0014750"/>
</dbReference>
<dbReference type="Gramene" id="OsLiXu_03g0014660.01">
    <property type="protein sequence ID" value="OsLiXu_03g0014660.01"/>
    <property type="gene ID" value="OsLiXu_03g0014660"/>
</dbReference>
<dbReference type="Gramene" id="OsMH63_03G014660_01">
    <property type="protein sequence ID" value="OsMH63_03G014660_01"/>
    <property type="gene ID" value="OsMH63_03G014660"/>
</dbReference>
<dbReference type="Gramene" id="OsPr106_03g0014600.01">
    <property type="protein sequence ID" value="OsPr106_03g0014600.01"/>
    <property type="gene ID" value="OsPr106_03g0014600"/>
</dbReference>
<dbReference type="Gramene" id="OsZS97_03G014610_01">
    <property type="protein sequence ID" value="OsZS97_03G014610_01"/>
    <property type="gene ID" value="OsZS97_03G014610"/>
</dbReference>
<dbReference type="HOGENOM" id="CLU_034328_1_1_1"/>
<dbReference type="OrthoDB" id="205108at2759"/>
<dbReference type="Proteomes" id="UP000007015">
    <property type="component" value="Chromosome 3"/>
</dbReference>
<dbReference type="GO" id="GO:0005768">
    <property type="term" value="C:endosome"/>
    <property type="evidence" value="ECO:0007669"/>
    <property type="project" value="TreeGrafter"/>
</dbReference>
<dbReference type="GO" id="GO:0000139">
    <property type="term" value="C:Golgi membrane"/>
    <property type="evidence" value="ECO:0007669"/>
    <property type="project" value="UniProtKB-SubCell"/>
</dbReference>
<dbReference type="GO" id="GO:0005802">
    <property type="term" value="C:trans-Golgi network"/>
    <property type="evidence" value="ECO:0007669"/>
    <property type="project" value="TreeGrafter"/>
</dbReference>
<dbReference type="GO" id="GO:0016758">
    <property type="term" value="F:hexosyltransferase activity"/>
    <property type="evidence" value="ECO:0007669"/>
    <property type="project" value="TreeGrafter"/>
</dbReference>
<dbReference type="GO" id="GO:0035252">
    <property type="term" value="F:UDP-xylosyltransferase activity"/>
    <property type="evidence" value="ECO:0007669"/>
    <property type="project" value="TreeGrafter"/>
</dbReference>
<dbReference type="GO" id="GO:0033843">
    <property type="term" value="F:xyloglucan 6-xylosyltransferase activity"/>
    <property type="evidence" value="ECO:0007669"/>
    <property type="project" value="TreeGrafter"/>
</dbReference>
<dbReference type="GO" id="GO:0009969">
    <property type="term" value="P:xyloglucan biosynthetic process"/>
    <property type="evidence" value="ECO:0007669"/>
    <property type="project" value="TreeGrafter"/>
</dbReference>
<dbReference type="FunFam" id="3.90.550.10:FF:000101">
    <property type="entry name" value="Probable glycosyltransferase 5"/>
    <property type="match status" value="1"/>
</dbReference>
<dbReference type="Gene3D" id="3.90.550.10">
    <property type="entry name" value="Spore Coat Polysaccharide Biosynthesis Protein SpsA, Chain A"/>
    <property type="match status" value="1"/>
</dbReference>
<dbReference type="InterPro" id="IPR008630">
    <property type="entry name" value="Glyco_trans_34"/>
</dbReference>
<dbReference type="InterPro" id="IPR029044">
    <property type="entry name" value="Nucleotide-diphossugar_trans"/>
</dbReference>
<dbReference type="PANTHER" id="PTHR31311:SF9">
    <property type="entry name" value="GLYCOSYLTRANSFERASE 5-RELATED"/>
    <property type="match status" value="1"/>
</dbReference>
<dbReference type="PANTHER" id="PTHR31311">
    <property type="entry name" value="XYLOGLUCAN 6-XYLOSYLTRANSFERASE 5-RELATED-RELATED"/>
    <property type="match status" value="1"/>
</dbReference>
<dbReference type="Pfam" id="PF05637">
    <property type="entry name" value="Glyco_transf_34"/>
    <property type="match status" value="1"/>
</dbReference>
<sequence length="449" mass="50430">MMEKHGGKVTSDRRAGRRQHGQRCSASDAAPLVVVVILIVGALFLILGPTGSSSFTVPRIRVVFNEPVHVAVAAPPPPPPPAQMQAGANASSEEDSGLPPPRQLTDPPYSLGRTILGYDARRSAWLAAHPEFPARVAPAGRPRVLVVTGSAPARCPDPDGDHLLLRAFKNKVDYCRIHGLDVFYNTAFLDAEMSGFWAKLPLLRMLMVAHPEAELIWWVDSDAVFTDMLFEIPWERYAVHNLVLHGWEAKVFDEKSWIGVNTGSFLIRNCQWSLDLLDAWAPMGPRGPVRDRYGELFAEELSGRPPFEADDQSALIYLLVTQRQRWGDKVFIESSYDLNGFWEGIVDRYEELRRAGRDDGRWPFVTHFVGCKPCRRYADSYPAERCRRGMERAFNFADDQILKLYGFAHESLNTTAVRRVRNETGEPLDAGDEELGRLLHPTFRAARPT</sequence>